<dbReference type="EC" id="4.2.1.118" evidence="6"/>
<dbReference type="EMBL" id="AE004091">
    <property type="protein sequence ID" value="AAG03631.1"/>
    <property type="molecule type" value="Genomic_DNA"/>
</dbReference>
<dbReference type="PIR" id="D83615">
    <property type="entry name" value="D83615"/>
</dbReference>
<dbReference type="RefSeq" id="NP_248933.1">
    <property type="nucleotide sequence ID" value="NC_002516.2"/>
</dbReference>
<dbReference type="SMR" id="Q9I6P6"/>
<dbReference type="STRING" id="208964.PA0242"/>
<dbReference type="PaxDb" id="208964-PA0242"/>
<dbReference type="GeneID" id="880907"/>
<dbReference type="KEGG" id="pae:PA0242"/>
<dbReference type="PATRIC" id="fig|208964.12.peg.252"/>
<dbReference type="PseudoCAP" id="PA0242"/>
<dbReference type="HOGENOM" id="CLU_029438_0_0_6"/>
<dbReference type="InParanoid" id="Q9I6P6"/>
<dbReference type="OrthoDB" id="9780241at2"/>
<dbReference type="PhylomeDB" id="Q9I6P6"/>
<dbReference type="BioCyc" id="PAER208964:G1FZ6-244-MONOMER"/>
<dbReference type="UniPathway" id="UPA00088"/>
<dbReference type="Proteomes" id="UP000002438">
    <property type="component" value="Chromosome"/>
</dbReference>
<dbReference type="GO" id="GO:0046565">
    <property type="term" value="F:3-dehydroshikimate dehydratase activity"/>
    <property type="evidence" value="ECO:0000250"/>
    <property type="project" value="UniProtKB"/>
</dbReference>
<dbReference type="GO" id="GO:0046872">
    <property type="term" value="F:metal ion binding"/>
    <property type="evidence" value="ECO:0007669"/>
    <property type="project" value="UniProtKB-UniRule"/>
</dbReference>
<dbReference type="GO" id="GO:0046279">
    <property type="term" value="P:3,4-dihydroxybenzoate biosynthetic process"/>
    <property type="evidence" value="ECO:0007669"/>
    <property type="project" value="UniProtKB-UniRule"/>
</dbReference>
<dbReference type="GO" id="GO:0019631">
    <property type="term" value="P:quinate catabolic process"/>
    <property type="evidence" value="ECO:0000315"/>
    <property type="project" value="UniProtKB"/>
</dbReference>
<dbReference type="GO" id="GO:0019633">
    <property type="term" value="P:shikimate catabolic process"/>
    <property type="evidence" value="ECO:0000315"/>
    <property type="project" value="UniProtKB"/>
</dbReference>
<dbReference type="CDD" id="cd08342">
    <property type="entry name" value="HPPD_N_like"/>
    <property type="match status" value="1"/>
</dbReference>
<dbReference type="Gene3D" id="3.10.180.10">
    <property type="entry name" value="2,3-Dihydroxybiphenyl 1,2-Dioxygenase, domain 1"/>
    <property type="match status" value="2"/>
</dbReference>
<dbReference type="Gene3D" id="3.20.20.150">
    <property type="entry name" value="Divalent-metal-dependent TIM barrel enzymes"/>
    <property type="match status" value="1"/>
</dbReference>
<dbReference type="HAMAP" id="MF_02238">
    <property type="entry name" value="DSD"/>
    <property type="match status" value="1"/>
</dbReference>
<dbReference type="InterPro" id="IPR041736">
    <property type="entry name" value="4OHPhenylPyrv_dOase_N"/>
</dbReference>
<dbReference type="InterPro" id="IPR043700">
    <property type="entry name" value="DSD"/>
</dbReference>
<dbReference type="InterPro" id="IPR029068">
    <property type="entry name" value="Glyas_Bleomycin-R_OHBP_Dase"/>
</dbReference>
<dbReference type="InterPro" id="IPR004360">
    <property type="entry name" value="Glyas_Fos-R_dOase_dom"/>
</dbReference>
<dbReference type="InterPro" id="IPR050312">
    <property type="entry name" value="IolE/XylAMocC-like"/>
</dbReference>
<dbReference type="InterPro" id="IPR050009">
    <property type="entry name" value="QuiC"/>
</dbReference>
<dbReference type="InterPro" id="IPR037523">
    <property type="entry name" value="VOC"/>
</dbReference>
<dbReference type="InterPro" id="IPR036237">
    <property type="entry name" value="Xyl_isomerase-like_sf"/>
</dbReference>
<dbReference type="InterPro" id="IPR013022">
    <property type="entry name" value="Xyl_isomerase-like_TIM-brl"/>
</dbReference>
<dbReference type="NCBIfam" id="NF042435">
    <property type="entry name" value="DhshikDhtase_QuiC"/>
    <property type="match status" value="1"/>
</dbReference>
<dbReference type="PANTHER" id="PTHR12110">
    <property type="entry name" value="HYDROXYPYRUVATE ISOMERASE"/>
    <property type="match status" value="1"/>
</dbReference>
<dbReference type="PANTHER" id="PTHR12110:SF21">
    <property type="entry name" value="XYLOSE ISOMERASE-LIKE TIM BARREL DOMAIN-CONTAINING PROTEIN"/>
    <property type="match status" value="1"/>
</dbReference>
<dbReference type="Pfam" id="PF01261">
    <property type="entry name" value="AP_endonuc_2"/>
    <property type="match status" value="1"/>
</dbReference>
<dbReference type="Pfam" id="PF00903">
    <property type="entry name" value="Glyoxalase"/>
    <property type="match status" value="1"/>
</dbReference>
<dbReference type="Pfam" id="PF14696">
    <property type="entry name" value="Glyoxalase_5"/>
    <property type="match status" value="1"/>
</dbReference>
<dbReference type="SUPFAM" id="SSF54593">
    <property type="entry name" value="Glyoxalase/Bleomycin resistance protein/Dihydroxybiphenyl dioxygenase"/>
    <property type="match status" value="1"/>
</dbReference>
<dbReference type="SUPFAM" id="SSF51658">
    <property type="entry name" value="Xylose isomerase-like"/>
    <property type="match status" value="1"/>
</dbReference>
<dbReference type="PROSITE" id="PS51819">
    <property type="entry name" value="VOC"/>
    <property type="match status" value="2"/>
</dbReference>
<name>DSD_PSEAE</name>
<protein>
    <recommendedName>
        <fullName evidence="5">3-dehydroshikimate dehydratase</fullName>
        <shortName evidence="5">DSD</shortName>
        <ecNumber evidence="6">4.2.1.118</ecNumber>
    </recommendedName>
</protein>
<keyword id="KW-0170">Cobalt</keyword>
<keyword id="KW-0456">Lyase</keyword>
<keyword id="KW-0460">Magnesium</keyword>
<keyword id="KW-0464">Manganese</keyword>
<keyword id="KW-0479">Metal-binding</keyword>
<keyword id="KW-0533">Nickel</keyword>
<keyword id="KW-1185">Reference proteome</keyword>
<gene>
    <name evidence="5" type="primary">quiC1</name>
    <name evidence="7" type="ordered locus">PA0242</name>
</gene>
<reference key="1">
    <citation type="journal article" date="2000" name="Nature">
        <title>Complete genome sequence of Pseudomonas aeruginosa PAO1, an opportunistic pathogen.</title>
        <authorList>
            <person name="Stover C.K."/>
            <person name="Pham X.-Q.T."/>
            <person name="Erwin A.L."/>
            <person name="Mizoguchi S.D."/>
            <person name="Warrener P."/>
            <person name="Hickey M.J."/>
            <person name="Brinkman F.S.L."/>
            <person name="Hufnagle W.O."/>
            <person name="Kowalik D.J."/>
            <person name="Lagrou M."/>
            <person name="Garber R.L."/>
            <person name="Goltry L."/>
            <person name="Tolentino E."/>
            <person name="Westbrock-Wadman S."/>
            <person name="Yuan Y."/>
            <person name="Brody L.L."/>
            <person name="Coulter S.N."/>
            <person name="Folger K.R."/>
            <person name="Kas A."/>
            <person name="Larbig K."/>
            <person name="Lim R.M."/>
            <person name="Smith K.A."/>
            <person name="Spencer D.H."/>
            <person name="Wong G.K.-S."/>
            <person name="Wu Z."/>
            <person name="Paulsen I.T."/>
            <person name="Reizer J."/>
            <person name="Saier M.H. Jr."/>
            <person name="Hancock R.E.W."/>
            <person name="Lory S."/>
            <person name="Olson M.V."/>
        </authorList>
    </citation>
    <scope>NUCLEOTIDE SEQUENCE [LARGE SCALE GENOMIC DNA]</scope>
    <source>
        <strain>ATCC 15692 / DSM 22644 / CIP 104116 / JCM 14847 / LMG 12228 / 1C / PRS 101 / PAO1</strain>
    </source>
</reference>
<reference key="2">
    <citation type="journal article" date="2017" name="Mol. Microbiol.">
        <title>Structurally diverse dehydroshikimate dehydratase variants participate in microbial quinate catabolism.</title>
        <authorList>
            <person name="Peek J."/>
            <person name="Roman J."/>
            <person name="Moran G.R."/>
            <person name="Christendat D."/>
        </authorList>
    </citation>
    <scope>FUNCTION</scope>
    <scope>DISRUPTION PHENOTYPE</scope>
    <scope>PATHWAY</scope>
    <source>
        <strain>ATCC 15692 / DSM 22644 / CIP 104116 / JCM 14847 / LMG 12228 / 1C / PRS 101 / PAO1</strain>
    </source>
</reference>
<proteinExistence type="inferred from homology"/>
<comment type="function">
    <text evidence="4">Catalyzes the conversion of 3-dehydroshikimate to protocatechuate (3,4-dihydroxybenzoate), a common intermediate of quinate and shikimate degradation pathways. Is required for growth on either quinate or shikimate as a sole carbon source.</text>
</comment>
<comment type="catalytic activity">
    <reaction evidence="6">
        <text>3-dehydroshikimate = 3,4-dihydroxybenzoate + H2O</text>
        <dbReference type="Rhea" id="RHEA:24848"/>
        <dbReference type="ChEBI" id="CHEBI:15377"/>
        <dbReference type="ChEBI" id="CHEBI:16630"/>
        <dbReference type="ChEBI" id="CHEBI:36241"/>
        <dbReference type="EC" id="4.2.1.118"/>
    </reaction>
    <physiologicalReaction direction="left-to-right" evidence="4">
        <dbReference type="Rhea" id="RHEA:24849"/>
    </physiologicalReaction>
</comment>
<comment type="cofactor">
    <cofactor evidence="1">
        <name>Co(2+)</name>
        <dbReference type="ChEBI" id="CHEBI:48828"/>
    </cofactor>
    <cofactor evidence="1">
        <name>Ni(2+)</name>
        <dbReference type="ChEBI" id="CHEBI:49786"/>
    </cofactor>
    <cofactor evidence="1">
        <name>Mg(2+)</name>
        <dbReference type="ChEBI" id="CHEBI:18420"/>
    </cofactor>
    <cofactor evidence="1">
        <name>Mn(2+)</name>
        <dbReference type="ChEBI" id="CHEBI:29035"/>
    </cofactor>
    <text evidence="1">Requires a divalent metal cation for DSD activity, with a preference for Co(2+) but can also use Ni(2+), Mn(2+) and Mg(2+).</text>
</comment>
<comment type="pathway">
    <text evidence="4">Aromatic compound metabolism; 3,4-dihydroxybenzoate biosynthesis.</text>
</comment>
<comment type="subunit">
    <text evidence="1">Homodimer.</text>
</comment>
<comment type="domain">
    <text evidence="1">Consists of a fusion of two distinct domains: an N-terminal sugar phosphate isomerase-like domain associated with DSD activity and a C-terminal hydroxyphenyl-pyruvate dioxygenase-like domain. This C-terminal domain does not show any 4-hydroxyphenylpyruvate dioxygenase (HPPD) or protocatechuate dioxygenase (PCD) activity, but appears to be important for optimal DSD activity of QuiC1 in vivo.</text>
</comment>
<comment type="disruption phenotype">
    <text evidence="4">While wild-type P.aeruginosa grows readily on either quinate or shikimate as a sole carbon source, the knockout strain does not efficiently utilize these substrates. Growth of the knockout is enhanced by the addition of protocatechuate, bypassing the function of QuiC1.</text>
</comment>
<comment type="similarity">
    <text evidence="2 6">Belongs to the bacterial two-domain DSD family.</text>
</comment>
<sequence length="634" mass="70216">MQRSIATVSLSGTLPEKLEAIAAAGFDGVEIFENDLLHYDGSPRDVRRLCADLGLEILLFQPFRDFEGCRRERLGRNLERAERKFDLMQELGTDLVLVCSNVAADALGEPALLADDLRQLAERAAVRGLRIGYEALAWGRQVNTWEQAWDLVRRADQANLGLILDSFHTLSLDGDPRGIADLPGEKIFFVQMADAPLLAMDVLEWSRHFRCFPGQGGFDLAGFLAPVVASGYRGPLSLEVFNDGFRAAPTRANAVDGLRSLLYLEEKTREHLQRQTPHVAVDELFAPPPASLCDGIEFLEFAVDETLGARLGQWLQRLGFARAGEHRSKNVSLLRQGDINLVLNAEPYSFAHGFFEAHGPSLCATALCVRDAGQALERARAYGGQPYRGLLGPNEREIPAVRALDGSLLYLVERHTEGRSIYDSDFVTNDADTSGLGLRRVDHVALALPAEGLDSWVLFYKSLFDFGADDEVVLPDPYGLVTSRAVRSPCGSVRLPLNISEDRNTAIARSLSSYRGSGVHHIAFDCADIFAAVAQAKEAGVALLEIPLNYYDDLAARFDFDDEFLSELAYYNVLYDRDAQGGELFHVFTEPFEERFFFEILQRRHGYAGYGAANVPVRLAAMAQARRGVRRVKL</sequence>
<accession>Q9I6P6</accession>
<feature type="chain" id="PRO_0000448877" description="3-dehydroshikimate dehydratase">
    <location>
        <begin position="1"/>
        <end position="634"/>
    </location>
</feature>
<feature type="domain" description="VOC 1" evidence="3">
    <location>
        <begin position="295"/>
        <end position="414"/>
    </location>
</feature>
<feature type="domain" description="VOC 2" evidence="3">
    <location>
        <begin position="440"/>
        <end position="590"/>
    </location>
</feature>
<feature type="binding site" evidence="1">
    <location>
        <position position="134"/>
    </location>
    <ligand>
        <name>a divalent metal cation</name>
        <dbReference type="ChEBI" id="CHEBI:60240"/>
        <note>catalytic</note>
    </ligand>
</feature>
<feature type="binding site" evidence="1">
    <location>
        <position position="165"/>
    </location>
    <ligand>
        <name>a divalent metal cation</name>
        <dbReference type="ChEBI" id="CHEBI:60240"/>
        <note>catalytic</note>
    </ligand>
</feature>
<feature type="binding site" evidence="1">
    <location>
        <position position="191"/>
    </location>
    <ligand>
        <name>a divalent metal cation</name>
        <dbReference type="ChEBI" id="CHEBI:60240"/>
        <note>catalytic</note>
    </ligand>
</feature>
<feature type="binding site" evidence="1">
    <location>
        <position position="239"/>
    </location>
    <ligand>
        <name>a divalent metal cation</name>
        <dbReference type="ChEBI" id="CHEBI:60240"/>
        <note>catalytic</note>
    </ligand>
</feature>
<feature type="binding site" evidence="1">
    <location>
        <position position="443"/>
    </location>
    <ligand>
        <name>Mg(2+)</name>
        <dbReference type="ChEBI" id="CHEBI:18420"/>
    </ligand>
</feature>
<feature type="binding site" evidence="1">
    <location>
        <position position="521"/>
    </location>
    <ligand>
        <name>Mg(2+)</name>
        <dbReference type="ChEBI" id="CHEBI:18420"/>
    </ligand>
</feature>
<feature type="binding site" evidence="1">
    <location>
        <position position="599"/>
    </location>
    <ligand>
        <name>Mg(2+)</name>
        <dbReference type="ChEBI" id="CHEBI:18420"/>
    </ligand>
</feature>
<evidence type="ECO:0000250" key="1">
    <source>
        <dbReference type="UniProtKB" id="Q88JU3"/>
    </source>
</evidence>
<evidence type="ECO:0000255" key="2">
    <source>
        <dbReference type="HAMAP-Rule" id="MF_02238"/>
    </source>
</evidence>
<evidence type="ECO:0000255" key="3">
    <source>
        <dbReference type="PROSITE-ProRule" id="PRU01163"/>
    </source>
</evidence>
<evidence type="ECO:0000269" key="4">
    <source>
    </source>
</evidence>
<evidence type="ECO:0000303" key="5">
    <source>
    </source>
</evidence>
<evidence type="ECO:0000305" key="6">
    <source>
    </source>
</evidence>
<evidence type="ECO:0000312" key="7">
    <source>
        <dbReference type="EMBL" id="AAG03631.1"/>
    </source>
</evidence>
<organism>
    <name type="scientific">Pseudomonas aeruginosa (strain ATCC 15692 / DSM 22644 / CIP 104116 / JCM 14847 / LMG 12228 / 1C / PRS 101 / PAO1)</name>
    <dbReference type="NCBI Taxonomy" id="208964"/>
    <lineage>
        <taxon>Bacteria</taxon>
        <taxon>Pseudomonadati</taxon>
        <taxon>Pseudomonadota</taxon>
        <taxon>Gammaproteobacteria</taxon>
        <taxon>Pseudomonadales</taxon>
        <taxon>Pseudomonadaceae</taxon>
        <taxon>Pseudomonas</taxon>
    </lineage>
</organism>